<dbReference type="EC" id="3.1.26.5" evidence="1"/>
<dbReference type="EMBL" id="CP000036">
    <property type="protein sequence ID" value="ABB68151.1"/>
    <property type="molecule type" value="Genomic_DNA"/>
</dbReference>
<dbReference type="RefSeq" id="WP_000239730.1">
    <property type="nucleotide sequence ID" value="NC_007613.1"/>
</dbReference>
<dbReference type="SMR" id="Q31UV7"/>
<dbReference type="GeneID" id="93778446"/>
<dbReference type="KEGG" id="sbo:SBO_3673"/>
<dbReference type="HOGENOM" id="CLU_117179_11_0_6"/>
<dbReference type="Proteomes" id="UP000007067">
    <property type="component" value="Chromosome"/>
</dbReference>
<dbReference type="GO" id="GO:0030677">
    <property type="term" value="C:ribonuclease P complex"/>
    <property type="evidence" value="ECO:0007669"/>
    <property type="project" value="TreeGrafter"/>
</dbReference>
<dbReference type="GO" id="GO:0042781">
    <property type="term" value="F:3'-tRNA processing endoribonuclease activity"/>
    <property type="evidence" value="ECO:0007669"/>
    <property type="project" value="TreeGrafter"/>
</dbReference>
<dbReference type="GO" id="GO:0004526">
    <property type="term" value="F:ribonuclease P activity"/>
    <property type="evidence" value="ECO:0007669"/>
    <property type="project" value="UniProtKB-UniRule"/>
</dbReference>
<dbReference type="GO" id="GO:0000049">
    <property type="term" value="F:tRNA binding"/>
    <property type="evidence" value="ECO:0007669"/>
    <property type="project" value="UniProtKB-UniRule"/>
</dbReference>
<dbReference type="GO" id="GO:0001682">
    <property type="term" value="P:tRNA 5'-leader removal"/>
    <property type="evidence" value="ECO:0007669"/>
    <property type="project" value="UniProtKB-UniRule"/>
</dbReference>
<dbReference type="FunFam" id="3.30.230.10:FF:000016">
    <property type="entry name" value="Ribonuclease P protein component"/>
    <property type="match status" value="1"/>
</dbReference>
<dbReference type="Gene3D" id="3.30.230.10">
    <property type="match status" value="1"/>
</dbReference>
<dbReference type="HAMAP" id="MF_00227">
    <property type="entry name" value="RNase_P"/>
    <property type="match status" value="1"/>
</dbReference>
<dbReference type="InterPro" id="IPR020568">
    <property type="entry name" value="Ribosomal_Su5_D2-typ_SF"/>
</dbReference>
<dbReference type="InterPro" id="IPR014721">
    <property type="entry name" value="Ribsml_uS5_D2-typ_fold_subgr"/>
</dbReference>
<dbReference type="InterPro" id="IPR000100">
    <property type="entry name" value="RNase_P"/>
</dbReference>
<dbReference type="InterPro" id="IPR020539">
    <property type="entry name" value="RNase_P_CS"/>
</dbReference>
<dbReference type="NCBIfam" id="TIGR00188">
    <property type="entry name" value="rnpA"/>
    <property type="match status" value="1"/>
</dbReference>
<dbReference type="PANTHER" id="PTHR33992">
    <property type="entry name" value="RIBONUCLEASE P PROTEIN COMPONENT"/>
    <property type="match status" value="1"/>
</dbReference>
<dbReference type="PANTHER" id="PTHR33992:SF1">
    <property type="entry name" value="RIBONUCLEASE P PROTEIN COMPONENT"/>
    <property type="match status" value="1"/>
</dbReference>
<dbReference type="Pfam" id="PF00825">
    <property type="entry name" value="Ribonuclease_P"/>
    <property type="match status" value="1"/>
</dbReference>
<dbReference type="SUPFAM" id="SSF54211">
    <property type="entry name" value="Ribosomal protein S5 domain 2-like"/>
    <property type="match status" value="1"/>
</dbReference>
<dbReference type="PROSITE" id="PS00648">
    <property type="entry name" value="RIBONUCLEASE_P"/>
    <property type="match status" value="1"/>
</dbReference>
<name>RNPA_SHIBS</name>
<feature type="chain" id="PRO_1000021465" description="Ribonuclease P protein component">
    <location>
        <begin position="1"/>
        <end position="119"/>
    </location>
</feature>
<evidence type="ECO:0000255" key="1">
    <source>
        <dbReference type="HAMAP-Rule" id="MF_00227"/>
    </source>
</evidence>
<organism>
    <name type="scientific">Shigella boydii serotype 4 (strain Sb227)</name>
    <dbReference type="NCBI Taxonomy" id="300268"/>
    <lineage>
        <taxon>Bacteria</taxon>
        <taxon>Pseudomonadati</taxon>
        <taxon>Pseudomonadota</taxon>
        <taxon>Gammaproteobacteria</taxon>
        <taxon>Enterobacterales</taxon>
        <taxon>Enterobacteriaceae</taxon>
        <taxon>Shigella</taxon>
    </lineage>
</organism>
<gene>
    <name evidence="1" type="primary">rnpA</name>
    <name type="ordered locus">SBO_3673</name>
</gene>
<accession>Q31UV7</accession>
<reference key="1">
    <citation type="journal article" date="2005" name="Nucleic Acids Res.">
        <title>Genome dynamics and diversity of Shigella species, the etiologic agents of bacillary dysentery.</title>
        <authorList>
            <person name="Yang F."/>
            <person name="Yang J."/>
            <person name="Zhang X."/>
            <person name="Chen L."/>
            <person name="Jiang Y."/>
            <person name="Yan Y."/>
            <person name="Tang X."/>
            <person name="Wang J."/>
            <person name="Xiong Z."/>
            <person name="Dong J."/>
            <person name="Xue Y."/>
            <person name="Zhu Y."/>
            <person name="Xu X."/>
            <person name="Sun L."/>
            <person name="Chen S."/>
            <person name="Nie H."/>
            <person name="Peng J."/>
            <person name="Xu J."/>
            <person name="Wang Y."/>
            <person name="Yuan Z."/>
            <person name="Wen Y."/>
            <person name="Yao Z."/>
            <person name="Shen Y."/>
            <person name="Qiang B."/>
            <person name="Hou Y."/>
            <person name="Yu J."/>
            <person name="Jin Q."/>
        </authorList>
    </citation>
    <scope>NUCLEOTIDE SEQUENCE [LARGE SCALE GENOMIC DNA]</scope>
    <source>
        <strain>Sb227</strain>
    </source>
</reference>
<sequence length="119" mass="13789">MVKLAFPRELRLLTPSQFTFVFQQPQRAGTPQITILGRLNSLGHPRIGLTVAKKNVRRAHERNRIKRLTRESFRLRQHELPAMDFVVVAKKGVADLDNRALSEALEKLWRRHCRLARGS</sequence>
<protein>
    <recommendedName>
        <fullName evidence="1">Ribonuclease P protein component</fullName>
        <shortName evidence="1">RNase P protein</shortName>
        <shortName evidence="1">RNaseP protein</shortName>
        <ecNumber evidence="1">3.1.26.5</ecNumber>
    </recommendedName>
    <alternativeName>
        <fullName evidence="1">Protein C5</fullName>
    </alternativeName>
</protein>
<comment type="function">
    <text evidence="1">RNaseP catalyzes the removal of the 5'-leader sequence from pre-tRNA to produce the mature 5'-terminus. It can also cleave other RNA substrates such as 4.5S RNA. The protein component plays an auxiliary but essential role in vivo by binding to the 5'-leader sequence and broadening the substrate specificity of the ribozyme.</text>
</comment>
<comment type="catalytic activity">
    <reaction evidence="1">
        <text>Endonucleolytic cleavage of RNA, removing 5'-extranucleotides from tRNA precursor.</text>
        <dbReference type="EC" id="3.1.26.5"/>
    </reaction>
</comment>
<comment type="subunit">
    <text evidence="1">Consists of a catalytic RNA component (M1 or rnpB) and a protein subunit.</text>
</comment>
<comment type="similarity">
    <text evidence="1">Belongs to the RnpA family.</text>
</comment>
<keyword id="KW-0255">Endonuclease</keyword>
<keyword id="KW-0378">Hydrolase</keyword>
<keyword id="KW-0540">Nuclease</keyword>
<keyword id="KW-0694">RNA-binding</keyword>
<keyword id="KW-0819">tRNA processing</keyword>
<proteinExistence type="inferred from homology"/>